<keyword id="KW-0274">FAD</keyword>
<keyword id="KW-0285">Flavoprotein</keyword>
<keyword id="KW-0560">Oxidoreductase</keyword>
<reference key="1">
    <citation type="journal article" date="2009" name="J. Bacteriol.">
        <title>Genome sequence of Azotobacter vinelandii, an obligate aerobe specialized to support diverse anaerobic metabolic processes.</title>
        <authorList>
            <person name="Setubal J.C."/>
            <person name="Dos Santos P."/>
            <person name="Goldman B.S."/>
            <person name="Ertesvaag H."/>
            <person name="Espin G."/>
            <person name="Rubio L.M."/>
            <person name="Valla S."/>
            <person name="Almeida N.F."/>
            <person name="Balasubramanian D."/>
            <person name="Cromes L."/>
            <person name="Curatti L."/>
            <person name="Du Z."/>
            <person name="Godsy E."/>
            <person name="Goodner B."/>
            <person name="Hellner-Burris K."/>
            <person name="Hernandez J.A."/>
            <person name="Houmiel K."/>
            <person name="Imperial J."/>
            <person name="Kennedy C."/>
            <person name="Larson T.J."/>
            <person name="Latreille P."/>
            <person name="Ligon L.S."/>
            <person name="Lu J."/>
            <person name="Maerk M."/>
            <person name="Miller N.M."/>
            <person name="Norton S."/>
            <person name="O'Carroll I.P."/>
            <person name="Paulsen I."/>
            <person name="Raulfs E.C."/>
            <person name="Roemer R."/>
            <person name="Rosser J."/>
            <person name="Segura D."/>
            <person name="Slater S."/>
            <person name="Stricklin S.L."/>
            <person name="Studholme D.J."/>
            <person name="Sun J."/>
            <person name="Viana C.J."/>
            <person name="Wallin E."/>
            <person name="Wang B."/>
            <person name="Wheeler C."/>
            <person name="Zhu H."/>
            <person name="Dean D.R."/>
            <person name="Dixon R."/>
            <person name="Wood D."/>
        </authorList>
    </citation>
    <scope>NUCLEOTIDE SEQUENCE [LARGE SCALE GENOMIC DNA]</scope>
    <source>
        <strain>DJ / ATCC BAA-1303</strain>
    </source>
</reference>
<feature type="chain" id="PRO_1000213845" description="D-amino acid dehydrogenase">
    <location>
        <begin position="1"/>
        <end position="432"/>
    </location>
</feature>
<feature type="binding site" evidence="1">
    <location>
        <begin position="3"/>
        <end position="17"/>
    </location>
    <ligand>
        <name>FAD</name>
        <dbReference type="ChEBI" id="CHEBI:57692"/>
    </ligand>
</feature>
<evidence type="ECO:0000255" key="1">
    <source>
        <dbReference type="HAMAP-Rule" id="MF_01202"/>
    </source>
</evidence>
<gene>
    <name evidence="1" type="primary">dadA</name>
    <name type="ordered locus">Avin_47980</name>
</gene>
<organism>
    <name type="scientific">Azotobacter vinelandii (strain DJ / ATCC BAA-1303)</name>
    <dbReference type="NCBI Taxonomy" id="322710"/>
    <lineage>
        <taxon>Bacteria</taxon>
        <taxon>Pseudomonadati</taxon>
        <taxon>Pseudomonadota</taxon>
        <taxon>Gammaproteobacteria</taxon>
        <taxon>Pseudomonadales</taxon>
        <taxon>Pseudomonadaceae</taxon>
        <taxon>Azotobacter</taxon>
    </lineage>
</organism>
<proteinExistence type="inferred from homology"/>
<protein>
    <recommendedName>
        <fullName evidence="1">D-amino acid dehydrogenase</fullName>
        <ecNumber evidence="1">1.4.99.-</ecNumber>
    </recommendedName>
</protein>
<accession>C1DJZ7</accession>
<name>DADA_AZOVD</name>
<sequence length="432" mass="47125">MRVLVLGSGVIGTTTAYYLARAGFEVVVVDRAEAPAMETSFANAGQVSPGYASPWAAPGVPLKALKWLFERHAPLAIRPTADWRQYLWLAQMLRNCTAGRYALNKERMVRLSEYSRDCLDELRAETGIDYEGRQLGTTQLFRTQRQLDAAGKDIAVLARSGVPYELLDRAGIARVEPALAGVADRLAGALRLPNDQTGDCHLFTTRLAELAAGLGVEFRFGQSVERLERDGERIVGVRIDGRLESADLYVLALGSYSPRLLAPLGIRAPIYPLKGYSLTIPIVDPAMAPTSTILDETYKVAITRFETRIRVGGMAELAGFDLSLNPRRRETLELVVGDLYPRGGDLARAEFWTGLRPATPDGTPIVGATRYRNLFLNTGHGTLGWTMACGSGRLLADLMARTRPQISAAGLDISRYGNSQENSTHVHPAPAN</sequence>
<comment type="function">
    <text evidence="1">Oxidative deamination of D-amino acids.</text>
</comment>
<comment type="catalytic activity">
    <reaction evidence="1">
        <text>a D-alpha-amino acid + A + H2O = a 2-oxocarboxylate + AH2 + NH4(+)</text>
        <dbReference type="Rhea" id="RHEA:18125"/>
        <dbReference type="ChEBI" id="CHEBI:13193"/>
        <dbReference type="ChEBI" id="CHEBI:15377"/>
        <dbReference type="ChEBI" id="CHEBI:17499"/>
        <dbReference type="ChEBI" id="CHEBI:28938"/>
        <dbReference type="ChEBI" id="CHEBI:35179"/>
        <dbReference type="ChEBI" id="CHEBI:59871"/>
    </reaction>
</comment>
<comment type="cofactor">
    <cofactor evidence="1">
        <name>FAD</name>
        <dbReference type="ChEBI" id="CHEBI:57692"/>
    </cofactor>
</comment>
<comment type="pathway">
    <text>Amino-acid degradation; D-alanine degradation; NH(3) and pyruvate from D-alanine: step 1/1.</text>
</comment>
<comment type="similarity">
    <text evidence="1">Belongs to the DadA oxidoreductase family.</text>
</comment>
<dbReference type="EC" id="1.4.99.-" evidence="1"/>
<dbReference type="EMBL" id="CP001157">
    <property type="protein sequence ID" value="ACO80902.1"/>
    <property type="molecule type" value="Genomic_DNA"/>
</dbReference>
<dbReference type="RefSeq" id="WP_012703264.1">
    <property type="nucleotide sequence ID" value="NC_012560.1"/>
</dbReference>
<dbReference type="SMR" id="C1DJZ7"/>
<dbReference type="STRING" id="322710.Avin_47980"/>
<dbReference type="EnsemblBacteria" id="ACO80902">
    <property type="protein sequence ID" value="ACO80902"/>
    <property type="gene ID" value="Avin_47980"/>
</dbReference>
<dbReference type="GeneID" id="88187670"/>
<dbReference type="KEGG" id="avn:Avin_47980"/>
<dbReference type="eggNOG" id="COG0665">
    <property type="taxonomic scope" value="Bacteria"/>
</dbReference>
<dbReference type="HOGENOM" id="CLU_007884_9_2_6"/>
<dbReference type="OrthoDB" id="9805337at2"/>
<dbReference type="UniPathway" id="UPA00043">
    <property type="reaction ID" value="UER00498"/>
</dbReference>
<dbReference type="Proteomes" id="UP000002424">
    <property type="component" value="Chromosome"/>
</dbReference>
<dbReference type="GO" id="GO:0005737">
    <property type="term" value="C:cytoplasm"/>
    <property type="evidence" value="ECO:0007669"/>
    <property type="project" value="TreeGrafter"/>
</dbReference>
<dbReference type="GO" id="GO:0005886">
    <property type="term" value="C:plasma membrane"/>
    <property type="evidence" value="ECO:0007669"/>
    <property type="project" value="TreeGrafter"/>
</dbReference>
<dbReference type="GO" id="GO:0008718">
    <property type="term" value="F:D-amino-acid dehydrogenase activity"/>
    <property type="evidence" value="ECO:0007669"/>
    <property type="project" value="UniProtKB-UniRule"/>
</dbReference>
<dbReference type="GO" id="GO:0055130">
    <property type="term" value="P:D-alanine catabolic process"/>
    <property type="evidence" value="ECO:0007669"/>
    <property type="project" value="UniProtKB-UniPathway"/>
</dbReference>
<dbReference type="FunFam" id="3.50.50.60:FF:000020">
    <property type="entry name" value="D-amino acid dehydrogenase"/>
    <property type="match status" value="1"/>
</dbReference>
<dbReference type="Gene3D" id="3.30.9.10">
    <property type="entry name" value="D-Amino Acid Oxidase, subunit A, domain 2"/>
    <property type="match status" value="1"/>
</dbReference>
<dbReference type="Gene3D" id="3.50.50.60">
    <property type="entry name" value="FAD/NAD(P)-binding domain"/>
    <property type="match status" value="2"/>
</dbReference>
<dbReference type="HAMAP" id="MF_01202">
    <property type="entry name" value="DadA"/>
    <property type="match status" value="1"/>
</dbReference>
<dbReference type="InterPro" id="IPR023080">
    <property type="entry name" value="DadA"/>
</dbReference>
<dbReference type="InterPro" id="IPR006076">
    <property type="entry name" value="FAD-dep_OxRdtase"/>
</dbReference>
<dbReference type="InterPro" id="IPR036188">
    <property type="entry name" value="FAD/NAD-bd_sf"/>
</dbReference>
<dbReference type="NCBIfam" id="NF001933">
    <property type="entry name" value="PRK00711.1"/>
    <property type="match status" value="1"/>
</dbReference>
<dbReference type="PANTHER" id="PTHR13847:SF280">
    <property type="entry name" value="D-AMINO ACID DEHYDROGENASE"/>
    <property type="match status" value="1"/>
</dbReference>
<dbReference type="PANTHER" id="PTHR13847">
    <property type="entry name" value="SARCOSINE DEHYDROGENASE-RELATED"/>
    <property type="match status" value="1"/>
</dbReference>
<dbReference type="Pfam" id="PF01266">
    <property type="entry name" value="DAO"/>
    <property type="match status" value="1"/>
</dbReference>
<dbReference type="SUPFAM" id="SSF54373">
    <property type="entry name" value="FAD-linked reductases, C-terminal domain"/>
    <property type="match status" value="1"/>
</dbReference>
<dbReference type="SUPFAM" id="SSF51905">
    <property type="entry name" value="FAD/NAD(P)-binding domain"/>
    <property type="match status" value="1"/>
</dbReference>